<organism>
    <name type="scientific">Helicobacter mustelae</name>
    <dbReference type="NCBI Taxonomy" id="217"/>
    <lineage>
        <taxon>Bacteria</taxon>
        <taxon>Pseudomonadati</taxon>
        <taxon>Campylobacterota</taxon>
        <taxon>Epsilonproteobacteria</taxon>
        <taxon>Campylobacterales</taxon>
        <taxon>Helicobacteraceae</taxon>
        <taxon>Helicobacter</taxon>
    </lineage>
</organism>
<keyword id="KW-0975">Bacterial flagellum</keyword>
<keyword id="KW-0903">Direct protein sequencing</keyword>
<protein>
    <recommendedName>
        <fullName>Flagellar hook protein FlgE</fullName>
    </recommendedName>
</protein>
<accession>P50611</accession>
<reference key="1">
    <citation type="journal article" date="1994" name="Mol. Microbiol.">
        <title>Non-motile mutants of Helicobacter pylori and Helicobacter mustelae defective in flagellar hook production.</title>
        <authorList>
            <person name="O'Toole P.W."/>
            <person name="Kostrzynska M."/>
            <person name="Trust T.J."/>
        </authorList>
    </citation>
    <scope>NUCLEOTIDE SEQUENCE [GENOMIC DNA] OF 24-426</scope>
    <scope>PROTEIN SEQUENCE OF 1-41 AND 420-454</scope>
    <source>
        <strain>4298</strain>
    </source>
</reference>
<comment type="function">
    <text>A flexible structure which links the flagellar filament to the drive apparatus in the basal body. Absence of the gene leads to absence of the hook protein, lack of the flagellar filament and thus loss of mobility. Approximately wild-type levels of the flagellar subunits are still produced and accumulate mostly in the cytosol.</text>
</comment>
<comment type="subcellular location">
    <subcellularLocation>
        <location>Bacterial flagellum basal body</location>
    </subcellularLocation>
</comment>
<comment type="similarity">
    <text evidence="1">Belongs to the flagella basal body rod proteins family.</text>
</comment>
<sequence>MLRSLWSGVSGMQAHQVALDVESNNIANVNTTGFKYSRASFVDMISQTKLIATSPHKGGLGGQNDVSVGLGVNVNSTTKVFSQGSTQNTDVKTDLAIEGDGFFIISPDRGKTQNFTRDGEFLFDANGNLVTNGGYVVQGWMKDDLRNAEKISEDDFFRVDTTKPIQNIQIDPAMMMPARASSNISLRANLNAGRHVDQVANVFGLGSTTKTPVDGINPIYDSHDNLTQKAEDFGALFTQSGDAIGLTENQGIWVSYKTSEMVNDIEATSGESSIEINHTRISFTNDSAASGISSVVAAQNAINALKQKTGVEAFVDNGMLRLQNKNNMDGDAEVKNIRITADGTGAFANFIEGDSDITAFRYRYTTSASPDSGTGQFRTTEDLRALIQYDANLIKDPSQAYTDSTASVSVKFNKYGMLEIQNKDNGDELKQDLNIFVSGYSSENSTNNFSEQDG</sequence>
<evidence type="ECO:0000305" key="1"/>
<name>FLGE_HELMU</name>
<gene>
    <name type="primary">flgE</name>
</gene>
<proteinExistence type="evidence at protein level"/>
<dbReference type="EMBL" id="U09548">
    <property type="protein sequence ID" value="AAA92801.1"/>
    <property type="molecule type" value="Genomic_DNA"/>
</dbReference>
<dbReference type="SMR" id="P50611"/>
<dbReference type="GO" id="GO:0009425">
    <property type="term" value="C:bacterial-type flagellum basal body"/>
    <property type="evidence" value="ECO:0007669"/>
    <property type="project" value="UniProtKB-SubCell"/>
</dbReference>
<dbReference type="GO" id="GO:0044781">
    <property type="term" value="P:bacterial-type flagellum organization"/>
    <property type="evidence" value="ECO:0007669"/>
    <property type="project" value="InterPro"/>
</dbReference>
<dbReference type="GO" id="GO:0071978">
    <property type="term" value="P:bacterial-type flagellum-dependent swarming motility"/>
    <property type="evidence" value="ECO:0007669"/>
    <property type="project" value="TreeGrafter"/>
</dbReference>
<dbReference type="Gene3D" id="3.30.70.2120">
    <property type="match status" value="1"/>
</dbReference>
<dbReference type="InterPro" id="IPR001444">
    <property type="entry name" value="Flag_bb_rod_N"/>
</dbReference>
<dbReference type="InterPro" id="IPR020013">
    <property type="entry name" value="Flagellar_FlgE/F/G"/>
</dbReference>
<dbReference type="InterPro" id="IPR010810">
    <property type="entry name" value="Flagellin_hook_IN_motif"/>
</dbReference>
<dbReference type="InterPro" id="IPR037925">
    <property type="entry name" value="FlgE/F/G-like"/>
</dbReference>
<dbReference type="InterPro" id="IPR012835">
    <property type="entry name" value="FlgE_epsilon"/>
</dbReference>
<dbReference type="InterPro" id="IPR053967">
    <property type="entry name" value="LlgE_F_G-like_D1"/>
</dbReference>
<dbReference type="NCBIfam" id="TIGR02489">
    <property type="entry name" value="flgE_epsilon"/>
    <property type="match status" value="1"/>
</dbReference>
<dbReference type="NCBIfam" id="TIGR03506">
    <property type="entry name" value="FlgEFG_subfam"/>
    <property type="match status" value="1"/>
</dbReference>
<dbReference type="PANTHER" id="PTHR30435:SF19">
    <property type="entry name" value="FLAGELLAR BASAL-BODY ROD PROTEIN FLGG"/>
    <property type="match status" value="1"/>
</dbReference>
<dbReference type="PANTHER" id="PTHR30435">
    <property type="entry name" value="FLAGELLAR PROTEIN"/>
    <property type="match status" value="1"/>
</dbReference>
<dbReference type="Pfam" id="PF07196">
    <property type="entry name" value="Flagellin_IN"/>
    <property type="match status" value="1"/>
</dbReference>
<dbReference type="Pfam" id="PF00460">
    <property type="entry name" value="Flg_bb_rod"/>
    <property type="match status" value="1"/>
</dbReference>
<dbReference type="Pfam" id="PF22692">
    <property type="entry name" value="LlgE_F_G_D1"/>
    <property type="match status" value="1"/>
</dbReference>
<dbReference type="SUPFAM" id="SSF117143">
    <property type="entry name" value="Flagellar hook protein flgE"/>
    <property type="match status" value="1"/>
</dbReference>
<feature type="chain" id="PRO_0000180830" description="Flagellar hook protein FlgE">
    <location>
        <begin position="1"/>
        <end position="454" status="greater than"/>
    </location>
</feature>
<feature type="sequence conflict" description="In Ref. 1; AA sequence." evidence="1" ref="1">
    <original>S</original>
    <variation>T</variation>
    <location>
        <position position="40"/>
    </location>
</feature>
<feature type="non-terminal residue">
    <location>
        <position position="454"/>
    </location>
</feature>